<accession>A3NDS2</accession>
<keyword id="KW-0030">Aminoacyl-tRNA synthetase</keyword>
<keyword id="KW-0067">ATP-binding</keyword>
<keyword id="KW-0963">Cytoplasm</keyword>
<keyword id="KW-0436">Ligase</keyword>
<keyword id="KW-0547">Nucleotide-binding</keyword>
<keyword id="KW-0648">Protein biosynthesis</keyword>
<organism>
    <name type="scientific">Burkholderia pseudomallei (strain 668)</name>
    <dbReference type="NCBI Taxonomy" id="320373"/>
    <lineage>
        <taxon>Bacteria</taxon>
        <taxon>Pseudomonadati</taxon>
        <taxon>Pseudomonadota</taxon>
        <taxon>Betaproteobacteria</taxon>
        <taxon>Burkholderiales</taxon>
        <taxon>Burkholderiaceae</taxon>
        <taxon>Burkholderia</taxon>
        <taxon>pseudomallei group</taxon>
    </lineage>
</organism>
<name>SYP_BURP6</name>
<dbReference type="EC" id="6.1.1.15" evidence="1"/>
<dbReference type="EMBL" id="CP000570">
    <property type="protein sequence ID" value="ABN83119.1"/>
    <property type="molecule type" value="Genomic_DNA"/>
</dbReference>
<dbReference type="RefSeq" id="WP_011852214.1">
    <property type="nucleotide sequence ID" value="NC_009074.1"/>
</dbReference>
<dbReference type="SMR" id="A3NDS2"/>
<dbReference type="KEGG" id="bpd:BURPS668_3482"/>
<dbReference type="HOGENOM" id="CLU_016739_0_0_4"/>
<dbReference type="GO" id="GO:0005829">
    <property type="term" value="C:cytosol"/>
    <property type="evidence" value="ECO:0007669"/>
    <property type="project" value="TreeGrafter"/>
</dbReference>
<dbReference type="GO" id="GO:0002161">
    <property type="term" value="F:aminoacyl-tRNA deacylase activity"/>
    <property type="evidence" value="ECO:0007669"/>
    <property type="project" value="InterPro"/>
</dbReference>
<dbReference type="GO" id="GO:0005524">
    <property type="term" value="F:ATP binding"/>
    <property type="evidence" value="ECO:0007669"/>
    <property type="project" value="UniProtKB-UniRule"/>
</dbReference>
<dbReference type="GO" id="GO:0004827">
    <property type="term" value="F:proline-tRNA ligase activity"/>
    <property type="evidence" value="ECO:0007669"/>
    <property type="project" value="UniProtKB-UniRule"/>
</dbReference>
<dbReference type="GO" id="GO:0006433">
    <property type="term" value="P:prolyl-tRNA aminoacylation"/>
    <property type="evidence" value="ECO:0007669"/>
    <property type="project" value="UniProtKB-UniRule"/>
</dbReference>
<dbReference type="CDD" id="cd04334">
    <property type="entry name" value="ProRS-INS"/>
    <property type="match status" value="1"/>
</dbReference>
<dbReference type="CDD" id="cd00861">
    <property type="entry name" value="ProRS_anticodon_short"/>
    <property type="match status" value="1"/>
</dbReference>
<dbReference type="CDD" id="cd00779">
    <property type="entry name" value="ProRS_core_prok"/>
    <property type="match status" value="1"/>
</dbReference>
<dbReference type="FunFam" id="3.30.930.10:FF:000043">
    <property type="entry name" value="Proline--tRNA ligase"/>
    <property type="match status" value="1"/>
</dbReference>
<dbReference type="FunFam" id="3.30.930.10:FF:000097">
    <property type="entry name" value="Proline--tRNA ligase"/>
    <property type="match status" value="1"/>
</dbReference>
<dbReference type="Gene3D" id="3.40.50.800">
    <property type="entry name" value="Anticodon-binding domain"/>
    <property type="match status" value="1"/>
</dbReference>
<dbReference type="Gene3D" id="3.30.930.10">
    <property type="entry name" value="Bira Bifunctional Protein, Domain 2"/>
    <property type="match status" value="2"/>
</dbReference>
<dbReference type="Gene3D" id="3.90.960.10">
    <property type="entry name" value="YbaK/aminoacyl-tRNA synthetase-associated domain"/>
    <property type="match status" value="1"/>
</dbReference>
<dbReference type="HAMAP" id="MF_01569">
    <property type="entry name" value="Pro_tRNA_synth_type1"/>
    <property type="match status" value="1"/>
</dbReference>
<dbReference type="InterPro" id="IPR002314">
    <property type="entry name" value="aa-tRNA-synt_IIb"/>
</dbReference>
<dbReference type="InterPro" id="IPR006195">
    <property type="entry name" value="aa-tRNA-synth_II"/>
</dbReference>
<dbReference type="InterPro" id="IPR045864">
    <property type="entry name" value="aa-tRNA-synth_II/BPL/LPL"/>
</dbReference>
<dbReference type="InterPro" id="IPR004154">
    <property type="entry name" value="Anticodon-bd"/>
</dbReference>
<dbReference type="InterPro" id="IPR036621">
    <property type="entry name" value="Anticodon-bd_dom_sf"/>
</dbReference>
<dbReference type="InterPro" id="IPR002316">
    <property type="entry name" value="Pro-tRNA-ligase_IIa"/>
</dbReference>
<dbReference type="InterPro" id="IPR004500">
    <property type="entry name" value="Pro-tRNA-synth_IIa_bac-type"/>
</dbReference>
<dbReference type="InterPro" id="IPR023717">
    <property type="entry name" value="Pro-tRNA-Synthase_IIa_type1"/>
</dbReference>
<dbReference type="InterPro" id="IPR050062">
    <property type="entry name" value="Pro-tRNA_synthetase"/>
</dbReference>
<dbReference type="InterPro" id="IPR044140">
    <property type="entry name" value="ProRS_anticodon_short"/>
</dbReference>
<dbReference type="InterPro" id="IPR033730">
    <property type="entry name" value="ProRS_core_prok"/>
</dbReference>
<dbReference type="InterPro" id="IPR036754">
    <property type="entry name" value="YbaK/aa-tRNA-synt-asso_dom_sf"/>
</dbReference>
<dbReference type="InterPro" id="IPR007214">
    <property type="entry name" value="YbaK/aa-tRNA-synth-assoc-dom"/>
</dbReference>
<dbReference type="NCBIfam" id="NF006625">
    <property type="entry name" value="PRK09194.1"/>
    <property type="match status" value="1"/>
</dbReference>
<dbReference type="NCBIfam" id="TIGR00409">
    <property type="entry name" value="proS_fam_II"/>
    <property type="match status" value="1"/>
</dbReference>
<dbReference type="PANTHER" id="PTHR42753">
    <property type="entry name" value="MITOCHONDRIAL RIBOSOME PROTEIN L39/PROLYL-TRNA LIGASE FAMILY MEMBER"/>
    <property type="match status" value="1"/>
</dbReference>
<dbReference type="PANTHER" id="PTHR42753:SF2">
    <property type="entry name" value="PROLINE--TRNA LIGASE"/>
    <property type="match status" value="1"/>
</dbReference>
<dbReference type="Pfam" id="PF03129">
    <property type="entry name" value="HGTP_anticodon"/>
    <property type="match status" value="1"/>
</dbReference>
<dbReference type="Pfam" id="PF00587">
    <property type="entry name" value="tRNA-synt_2b"/>
    <property type="match status" value="1"/>
</dbReference>
<dbReference type="Pfam" id="PF04073">
    <property type="entry name" value="tRNA_edit"/>
    <property type="match status" value="1"/>
</dbReference>
<dbReference type="PIRSF" id="PIRSF001535">
    <property type="entry name" value="ProRS_1"/>
    <property type="match status" value="1"/>
</dbReference>
<dbReference type="PRINTS" id="PR01046">
    <property type="entry name" value="TRNASYNTHPRO"/>
</dbReference>
<dbReference type="SUPFAM" id="SSF52954">
    <property type="entry name" value="Class II aaRS ABD-related"/>
    <property type="match status" value="1"/>
</dbReference>
<dbReference type="SUPFAM" id="SSF55681">
    <property type="entry name" value="Class II aaRS and biotin synthetases"/>
    <property type="match status" value="1"/>
</dbReference>
<dbReference type="SUPFAM" id="SSF55826">
    <property type="entry name" value="YbaK/ProRS associated domain"/>
    <property type="match status" value="1"/>
</dbReference>
<dbReference type="PROSITE" id="PS50862">
    <property type="entry name" value="AA_TRNA_LIGASE_II"/>
    <property type="match status" value="1"/>
</dbReference>
<protein>
    <recommendedName>
        <fullName evidence="1">Proline--tRNA ligase</fullName>
        <ecNumber evidence="1">6.1.1.15</ecNumber>
    </recommendedName>
    <alternativeName>
        <fullName evidence="1">Prolyl-tRNA synthetase</fullName>
        <shortName evidence="1">ProRS</shortName>
    </alternativeName>
</protein>
<feature type="chain" id="PRO_1000069126" description="Proline--tRNA ligase">
    <location>
        <begin position="1"/>
        <end position="578"/>
    </location>
</feature>
<reference key="1">
    <citation type="journal article" date="2010" name="Genome Biol. Evol.">
        <title>Continuing evolution of Burkholderia mallei through genome reduction and large-scale rearrangements.</title>
        <authorList>
            <person name="Losada L."/>
            <person name="Ronning C.M."/>
            <person name="DeShazer D."/>
            <person name="Woods D."/>
            <person name="Fedorova N."/>
            <person name="Kim H.S."/>
            <person name="Shabalina S.A."/>
            <person name="Pearson T.R."/>
            <person name="Brinkac L."/>
            <person name="Tan P."/>
            <person name="Nandi T."/>
            <person name="Crabtree J."/>
            <person name="Badger J."/>
            <person name="Beckstrom-Sternberg S."/>
            <person name="Saqib M."/>
            <person name="Schutzer S.E."/>
            <person name="Keim P."/>
            <person name="Nierman W.C."/>
        </authorList>
    </citation>
    <scope>NUCLEOTIDE SEQUENCE [LARGE SCALE GENOMIC DNA]</scope>
    <source>
        <strain>668</strain>
    </source>
</reference>
<sequence length="578" mass="63434">MKASRFFIGTLKEAPADAEIVSHKLMVRAGMIRRVAGGIYNYLPVGLRSIRKVEAIVREEMNRAGAIELLMPAVQPAELWQESGRWEQYGPELLRFKDRKQNEFVIGPTHEEVVTDIARNQIKSYRQMPVNFYQIQTKFRDEIRPRFGVMRGREFIMKDAYSFDKDHESLKESYKKMYDAYVRIFTRIGLEFRPVAADNGSIGGSGSHEFHVIADTGEDAIAYCPTSDFAANVEAAEALPLLASRAAPAEAMQKVATPGKAKCEAVAELMGIPLERTIKSIVLATDNEGAEPTIWLLMLRGDHDLNEIKTAKLPGLAGHRFATEAEIVEWFGTPPGYLGPIGTKKPVRVVADRTVANMSDFVVGANEVDYHIAGVNWGRDLPEPVVADIRNVKAGDPSPDGKGALDICRGIEVGHVFQLGTKYSDAMGATFIDESGKAQPMVMGCYGIGITRILGAAIEQNFDDKGIVWPEAIAPFEVVLCPMGYDRSDAVREAADKLYAELAAAGIDVILDDRGERPGVMFADWELIGVPHRLVIGERGLKDGKIEYQGRRDAEATLLPADSAAAAVAEKVRAALAR</sequence>
<proteinExistence type="inferred from homology"/>
<gene>
    <name evidence="1" type="primary">proS</name>
    <name type="ordered locus">BURPS668_3482</name>
</gene>
<comment type="function">
    <text evidence="1">Catalyzes the attachment of proline to tRNA(Pro) in a two-step reaction: proline is first activated by ATP to form Pro-AMP and then transferred to the acceptor end of tRNA(Pro). As ProRS can inadvertently accommodate and process non-cognate amino acids such as alanine and cysteine, to avoid such errors it has two additional distinct editing activities against alanine. One activity is designated as 'pretransfer' editing and involves the tRNA(Pro)-independent hydrolysis of activated Ala-AMP. The other activity is designated 'posttransfer' editing and involves deacylation of mischarged Ala-tRNA(Pro). The misacylated Cys-tRNA(Pro) is not edited by ProRS.</text>
</comment>
<comment type="catalytic activity">
    <reaction evidence="1">
        <text>tRNA(Pro) + L-proline + ATP = L-prolyl-tRNA(Pro) + AMP + diphosphate</text>
        <dbReference type="Rhea" id="RHEA:14305"/>
        <dbReference type="Rhea" id="RHEA-COMP:9700"/>
        <dbReference type="Rhea" id="RHEA-COMP:9702"/>
        <dbReference type="ChEBI" id="CHEBI:30616"/>
        <dbReference type="ChEBI" id="CHEBI:33019"/>
        <dbReference type="ChEBI" id="CHEBI:60039"/>
        <dbReference type="ChEBI" id="CHEBI:78442"/>
        <dbReference type="ChEBI" id="CHEBI:78532"/>
        <dbReference type="ChEBI" id="CHEBI:456215"/>
        <dbReference type="EC" id="6.1.1.15"/>
    </reaction>
</comment>
<comment type="subunit">
    <text evidence="1">Homodimer.</text>
</comment>
<comment type="subcellular location">
    <subcellularLocation>
        <location evidence="1">Cytoplasm</location>
    </subcellularLocation>
</comment>
<comment type="domain">
    <text evidence="1">Consists of three domains: the N-terminal catalytic domain, the editing domain and the C-terminal anticodon-binding domain.</text>
</comment>
<comment type="similarity">
    <text evidence="1">Belongs to the class-II aminoacyl-tRNA synthetase family. ProS type 1 subfamily.</text>
</comment>
<evidence type="ECO:0000255" key="1">
    <source>
        <dbReference type="HAMAP-Rule" id="MF_01569"/>
    </source>
</evidence>